<keyword id="KW-0002">3D-structure</keyword>
<keyword id="KW-0051">Antiviral defense</keyword>
<keyword id="KW-0997">Cell inner membrane</keyword>
<keyword id="KW-1003">Cell membrane</keyword>
<keyword id="KW-0963">Cytoplasm</keyword>
<keyword id="KW-0449">Lipoprotein</keyword>
<keyword id="KW-0472">Membrane</keyword>
<keyword id="KW-0564">Palmitate</keyword>
<keyword id="KW-0812">Transmembrane</keyword>
<keyword id="KW-1134">Transmembrane beta strand</keyword>
<name>GSDM_RUNZN</name>
<feature type="chain" id="PRO_0000455572" description="Gasdermin bGSDM">
    <location>
        <begin position="1"/>
        <end position="268"/>
    </location>
</feature>
<feature type="chain" id="PRO_0000455573" description="Gasdermin bGSDM, N-terminus" evidence="3">
    <location>
        <begin position="1"/>
        <end position="247"/>
    </location>
</feature>
<feature type="transmembrane region" description="Beta stranded" evidence="2">
    <location>
        <begin position="78"/>
        <end position="94"/>
    </location>
</feature>
<feature type="transmembrane region" description="Beta stranded" evidence="2">
    <location>
        <begin position="103"/>
        <end position="121"/>
    </location>
</feature>
<feature type="transmembrane region" description="Beta stranded" evidence="2">
    <location>
        <begin position="168"/>
        <end position="185"/>
    </location>
</feature>
<feature type="transmembrane region" description="Beta stranded" evidence="2">
    <location>
        <begin position="195"/>
        <end position="211"/>
    </location>
</feature>
<feature type="region of interest" description="C-terminal region" evidence="3">
    <location>
        <begin position="248"/>
        <end position="268"/>
    </location>
</feature>
<feature type="site" description="Cleavage; by protease G563DRAFT_02009" evidence="3">
    <location>
        <begin position="247"/>
        <end position="248"/>
    </location>
</feature>
<feature type="lipid moiety-binding region" description="S-palmitoyl cysteine" evidence="3">
    <location>
        <position position="3"/>
    </location>
</feature>
<feature type="mutagenesis site" description="Protein is less thermostable, operon is no longer toxic in E.coli, protein is partially cleaved by neighboring protease, still forms membrane puncta in liposomes which are less leaky than wild-type in vitro." evidence="3">
    <original>C</original>
    <variation>A</variation>
    <location>
        <position position="3"/>
    </location>
</feature>
<feature type="mutagenesis site" description="Reduced cleavage, still toxic." evidence="3">
    <original>N</original>
    <variation>A</variation>
    <location>
        <position position="244"/>
    </location>
</feature>
<feature type="mutagenesis site" description="Reduced cleavage, still toxic." evidence="3">
    <original>R</original>
    <variation>A</variation>
    <location>
        <position position="245"/>
    </location>
</feature>
<feature type="mutagenesis site" description="Reduced cleavage, still toxic." evidence="3">
    <original>V</original>
    <variation>A</variation>
    <location>
        <position position="246"/>
    </location>
</feature>
<feature type="mutagenesis site" description="No longer cleaved by protease, non-toxic, liposomes incubated with bGSDM do not leak." evidence="3">
    <original>L</original>
    <variation>A</variation>
    <location>
        <position position="247"/>
    </location>
</feature>
<feature type="mutagenesis site" description="Increased cell growth arrest upon induction, toxic in the absence of protease." evidence="3">
    <location>
        <begin position="248"/>
        <end position="268"/>
    </location>
</feature>
<feature type="mutagenesis site" description="No longer cleaved by protease, non-toxic." evidence="3">
    <original>G</original>
    <variation>A</variation>
    <location>
        <position position="248"/>
    </location>
</feature>
<feature type="mutagenesis site" description="Cleaved by protease, reduced toxicity." evidence="3">
    <original>E</original>
    <variation>A</variation>
    <location>
        <position position="249"/>
    </location>
</feature>
<feature type="mutagenesis site" description="Partially cleaved by protease, non-toxic." evidence="3">
    <original>N</original>
    <variation>A</variation>
    <location>
        <position position="250"/>
    </location>
</feature>
<feature type="mutagenesis site" description="Cleaved by protease, non-toxic." evidence="3">
    <original>M</original>
    <variation>A</variation>
    <location>
        <position position="251"/>
    </location>
</feature>
<evidence type="ECO:0000250" key="1">
    <source>
        <dbReference type="UniProtKB" id="A0A0S2DNG5"/>
    </source>
</evidence>
<evidence type="ECO:0000250" key="2">
    <source>
        <dbReference type="UniProtKB" id="A0A2T4VDM4"/>
    </source>
</evidence>
<evidence type="ECO:0000269" key="3">
    <source>
    </source>
</evidence>
<evidence type="ECO:0000269" key="4">
    <source>
    </source>
</evidence>
<evidence type="ECO:0000303" key="5">
    <source>
    </source>
</evidence>
<evidence type="ECO:0000305" key="6"/>
<evidence type="ECO:0000305" key="7">
    <source>
    </source>
</evidence>
<evidence type="ECO:0007744" key="8">
    <source>
        <dbReference type="PDB" id="7N52"/>
    </source>
</evidence>
<accession>P0DV48</accession>
<protein>
    <recommendedName>
        <fullName evidence="6">Gasdermin bGSDM</fullName>
        <shortName evidence="5">bGSDM</shortName>
    </recommendedName>
    <alternativeName>
        <fullName evidence="5">Bacterial gasdermin</fullName>
    </alternativeName>
    <component>
        <recommendedName>
            <fullName evidence="6">Gasdermin bGSDM, N-terminus</fullName>
        </recommendedName>
    </component>
</protein>
<dbReference type="EMBL" id="AUIF01000011">
    <property type="status" value="NOT_ANNOTATED_CDS"/>
    <property type="molecule type" value="Genomic_DNA"/>
</dbReference>
<dbReference type="RefSeq" id="WP_157585058.1">
    <property type="nucleotide sequence ID" value="NZ_AUIF01000011.1"/>
</dbReference>
<dbReference type="PDB" id="7N52">
    <property type="method" value="X-ray"/>
    <property type="resolution" value="1.67 A"/>
    <property type="chains" value="A/B/C/D=2-268"/>
</dbReference>
<dbReference type="PDBsum" id="7N52"/>
<dbReference type="SMR" id="P0DV48"/>
<dbReference type="GO" id="GO:0005737">
    <property type="term" value="C:cytoplasm"/>
    <property type="evidence" value="ECO:0007669"/>
    <property type="project" value="UniProtKB-SubCell"/>
</dbReference>
<dbReference type="GO" id="GO:0005886">
    <property type="term" value="C:plasma membrane"/>
    <property type="evidence" value="ECO:0007669"/>
    <property type="project" value="UniProtKB-SubCell"/>
</dbReference>
<dbReference type="GO" id="GO:0051607">
    <property type="term" value="P:defense response to virus"/>
    <property type="evidence" value="ECO:0007669"/>
    <property type="project" value="UniProtKB-KW"/>
</dbReference>
<sequence length="268" mass="30330">MECNDPFVVALKDKGYSLVAYPKTSIRPLHIYEHTIKNAFKRIWIQSEAQPTSGFIKSLFSDKIHGAIGLSDGQGIDIDLRKTNSLSSAVAAKILESYFQDSAPSFDLAFENSSSVIFHIEEIITTDADEISLRNWLNDNQNELREIYKEEIKKGNFFVATSLLRAKKMRMQFERKNKGELGVDVSKIKNLPVDAKLESKIEGSTYDRLVFETPDEGIVFGVKLVRLFFSDNGILTIDKKQDFNRVLGENMALNLFTEIQDAGFIEVT</sequence>
<gene>
    <name evidence="5" type="ORF">G563DRAFT_02010</name>
</gene>
<proteinExistence type="evidence at protein level"/>
<comment type="function">
    <molecule>Gasdermin bGSDM</molecule>
    <text evidence="1 3">Precursor of a pore-forming protein involved in defense against bacteriophages (By similarity). Cleavage of this precursor by its dedicated, neighboring protease (G563DRAFT_02009) releases the active moiety (gasdermin bGSDM, N-terminus) which inserts into membranes, forming pores and triggering cell death (PubMed:35025633). Expression of bGSDM and its protease is highly toxic in E.coli (PubMed:35025633). Cells expressing the gene pair stop dividing and lose membrane integrity (PubMed:35025633). Both proteins are required to kill E.coli (PubMed:35025633).</text>
</comment>
<comment type="function">
    <molecule>Gasdermin bGSDM, N-terminus</molecule>
    <text evidence="3 4">Pore-forming protein that causes membrane permeabilization via a pyroptosis-like activity (PubMed:35025633). Makes ring-like pores with walls about 50 Angstroms thick and an interior pore diameter of 200-300 Angstroms, when integrated in liposomes (PubMed:35025633, PubMed:38509367).</text>
</comment>
<comment type="activity regulation">
    <molecule>Gasdermin bGSDM</molecule>
    <text evidence="3">The full-length protein before cleavage is inactive: intramolecular interactions between the N-terminal domain and the C-terminal region, as well as the lipid modification, mediate autoinhibition (PubMed:35025633). The pyroptosis-like-inducing activity is carried by the released N-terminal domain (gasdermin bGSDM, N-terminus) (PubMed:35025633).</text>
</comment>
<comment type="subunit">
    <molecule>Gasdermin bGSDM</molecule>
    <text evidence="3">Monomer in solution.</text>
</comment>
<comment type="subunit">
    <molecule>Gasdermin bGSDM, N-terminus</molecule>
    <text evidence="3 4">Forms large, homooligomeric ring-shaped pores when inserted in membranes (PubMed:35025633, PubMed:38509367).</text>
</comment>
<comment type="subcellular location">
    <molecule>Gasdermin bGSDM</molecule>
    <subcellularLocation>
        <location evidence="3">Cytoplasm</location>
    </subcellularLocation>
</comment>
<comment type="subcellular location">
    <molecule>Gasdermin bGSDM, N-terminus</molecule>
    <subcellularLocation>
        <location evidence="3 7">Cell inner membrane</location>
        <topology evidence="6">Multi-pass membrane protein</topology>
    </subcellularLocation>
    <text evidence="3">Upon proteolysis the protein forms membrane-associated puncta.</text>
</comment>
<comment type="domain">
    <text evidence="3">The N-terminus has marked structural similarity to the mammalian gasdermin N-terminal domain. The C-terminal region wraps around the twisted beta sheet core, probably stabilizing the inactive state. The C-terminal region can assume multiple conformations.</text>
</comment>
<comment type="domain">
    <text evidence="2">The beta-stranded transmembrane 'fingers' of the active protein form by local refolding of several alpha helices found only in the inactive state. Reorientation of the N-terminus probably flips the palmitoyl moiety for insertion into the membrane.</text>
</comment>
<comment type="PTM">
    <molecule>Gasdermin bGSDM</molecule>
    <text evidence="3">Cleavage by the adjacently encoded protease (G563DRAFT_02009) between Leu-247 and Gly-248 relieves autoinhibition, releasing the N-terminus which initiates loss of cell integrity.</text>
</comment>
<comment type="PTM">
    <text evidence="2 3">Palmitoylation helps stabilize the inactive state; may self-palmitoylate (PubMed:35025633). Palmitoylation is not required for permeabilization of liposomes by the ring-like pores in vitro (PubMed:35025633). Palmitoylation plays a significant role in pore formation (By similarity).</text>
</comment>
<comment type="mass spectrometry" mass="28228.49" method="Electrospray" evidence="3">
    <text>Gasdermin bGSDM, N-terminus, palmitoylated.</text>
</comment>
<comment type="mass spectrometry" mass="30284.94" method="Electrospray" evidence="3">
    <text>Full-length, unmodified protein expressed in E.coli.</text>
</comment>
<comment type="mass spectrometry" mass="30523.41" method="Electrospray" evidence="3">
    <text>Full-length, palmitoylated protein expressed in E.coli.</text>
</comment>
<comment type="mass spectrometry" mass="30549.07" method="Electrospray" evidence="3">
    <text>Full-length, modified protein expressed in E.coli.</text>
</comment>
<comment type="similarity">
    <text evidence="3">Belongs to the bacterial gasdermin family.</text>
</comment>
<reference key="1">
    <citation type="submission" date="2013-07" db="EMBL/GenBank/DDBJ databases">
        <authorList>
            <person name="Kyrpides N."/>
            <person name="Huntemann M."/>
            <person name="Han J."/>
            <person name="Chen A."/>
            <person name="Mavromatis K."/>
            <person name="Markowitz V."/>
            <person name="Palaniappan K."/>
            <person name="Ivanova N."/>
            <person name="Schaumberg A."/>
            <person name="Pati A."/>
            <person name="Liolios K."/>
            <person name="Nordberg H.P."/>
            <person name="Cantor M.N."/>
            <person name="Hua S.X."/>
            <person name="Woyke T."/>
        </authorList>
    </citation>
    <scope>NUCLEOTIDE SEQUENCE [LARGE SCALE GENOMIC DNA]</scope>
    <source>
        <strain>ATCC BAA-293 / DSM 19591 / LMG 21438 / NS12</strain>
    </source>
</reference>
<reference key="2">
    <citation type="journal article" date="2024" name="Nature">
        <title>Structure and assembly of a bacterial gasdermin pore.</title>
        <authorList>
            <person name="Johnson A.G."/>
            <person name="Mayer M.L."/>
            <person name="Schaefer S.L."/>
            <person name="McNamara-Bordewick N.K."/>
            <person name="Hummer G."/>
            <person name="Kranzusch P.J."/>
        </authorList>
    </citation>
    <scope>FUNCTION</scope>
    <scope>SUBUNIT</scope>
    <scope>SUBCELLULAR LOCATION</scope>
    <source>
        <strain>ATCC BAA-293 / DSM 19591 / LMG 21438 / NS12</strain>
    </source>
</reference>
<reference evidence="8" key="3">
    <citation type="journal article" date="2022" name="Science">
        <title>Bacterial gasdermins reveal an ancient mechanism of cell death.</title>
        <authorList>
            <person name="Johnson A.G."/>
            <person name="Wein T."/>
            <person name="Mayer M.L."/>
            <person name="Duncan-Lowey B."/>
            <person name="Yirmiya E."/>
            <person name="Oppenheimer-Shaanan Y."/>
            <person name="Amitai G."/>
            <person name="Sorek R."/>
            <person name="Kranzusch P.J."/>
        </authorList>
    </citation>
    <scope>X-RAY CRYSTALLOGRAPHY (2.90 ANGSTROMS) OF 2-268</scope>
    <scope>FUNCTION</scope>
    <scope>ACTIVITY REGULATION</scope>
    <scope>SUBUNIT</scope>
    <scope>SUBCELLULAR LOCATION</scope>
    <scope>MASS SPECTROMETRY</scope>
    <scope>PALMITOYLATION AT CYS-3</scope>
    <scope>MUTAGENESIS OF CYS-3; ASN-244; ARG-245; VAL-246; LEU-247; 248-GLY--THR-268; GLY-248; GLU-249; ASN-250 AND MET-251</scope>
    <source>
        <strain>ATCC BAA-293 / DSM 19591 / LMG 21438 / NS12</strain>
    </source>
</reference>
<organism>
    <name type="scientific">Runella zeae (strain ATCC BAA-293 / DSM 19591 / LMG 21438 / NS12)</name>
    <dbReference type="NCBI Taxonomy" id="1123078"/>
    <lineage>
        <taxon>Bacteria</taxon>
        <taxon>Pseudomonadati</taxon>
        <taxon>Bacteroidota</taxon>
        <taxon>Cytophagia</taxon>
        <taxon>Cytophagales</taxon>
        <taxon>Spirosomataceae</taxon>
        <taxon>Runella</taxon>
    </lineage>
</organism>